<comment type="function">
    <text evidence="1">Core subunit of the mitochondrial membrane respiratory chain NADH dehydrogenase (Complex I) which catalyzes electron transfer from NADH through the respiratory chain, using ubiquinone as an electron acceptor. Essential for the catalytic activity and assembly of complex I.</text>
</comment>
<comment type="catalytic activity">
    <reaction evidence="1">
        <text>a ubiquinone + NADH + 5 H(+)(in) = a ubiquinol + NAD(+) + 4 H(+)(out)</text>
        <dbReference type="Rhea" id="RHEA:29091"/>
        <dbReference type="Rhea" id="RHEA-COMP:9565"/>
        <dbReference type="Rhea" id="RHEA-COMP:9566"/>
        <dbReference type="ChEBI" id="CHEBI:15378"/>
        <dbReference type="ChEBI" id="CHEBI:16389"/>
        <dbReference type="ChEBI" id="CHEBI:17976"/>
        <dbReference type="ChEBI" id="CHEBI:57540"/>
        <dbReference type="ChEBI" id="CHEBI:57945"/>
        <dbReference type="EC" id="7.1.1.2"/>
    </reaction>
</comment>
<comment type="subunit">
    <text evidence="2">Core subunit of respiratory chain NADH dehydrogenase (Complex I) which is composed of 45 different subunits.</text>
</comment>
<comment type="subcellular location">
    <subcellularLocation>
        <location evidence="2">Mitochondrion inner membrane</location>
        <topology evidence="3">Multi-pass membrane protein</topology>
    </subcellularLocation>
</comment>
<comment type="similarity">
    <text evidence="4">Belongs to the complex I subunit 6 family.</text>
</comment>
<dbReference type="EC" id="7.1.1.2" evidence="1"/>
<dbReference type="EMBL" id="X83427">
    <property type="protein sequence ID" value="CAA58453.1"/>
    <property type="molecule type" value="Genomic_DNA"/>
</dbReference>
<dbReference type="PIR" id="D58889">
    <property type="entry name" value="D58889"/>
</dbReference>
<dbReference type="RefSeq" id="NP_008054.1">
    <property type="nucleotide sequence ID" value="NC_000891.1"/>
</dbReference>
<dbReference type="SMR" id="Q36460"/>
<dbReference type="FunCoup" id="Q36460">
    <property type="interactions" value="261"/>
</dbReference>
<dbReference type="STRING" id="9258.ENSOANP00000024986"/>
<dbReference type="Ensembl" id="ENSOANT00000028485.1">
    <property type="protein sequence ID" value="ENSOANP00000024986.1"/>
    <property type="gene ID" value="ENSOANG00000019361.1"/>
</dbReference>
<dbReference type="GeneID" id="808706"/>
<dbReference type="KEGG" id="oaa:808706"/>
<dbReference type="CTD" id="4541"/>
<dbReference type="eggNOG" id="ENOG502S2Q2">
    <property type="taxonomic scope" value="Eukaryota"/>
</dbReference>
<dbReference type="GeneTree" id="ENSGT00390000003988"/>
<dbReference type="HOGENOM" id="CLU_129718_0_0_1"/>
<dbReference type="InParanoid" id="Q36460"/>
<dbReference type="OMA" id="MIAVACN"/>
<dbReference type="OrthoDB" id="9837654at2759"/>
<dbReference type="TreeFam" id="TF343324"/>
<dbReference type="Proteomes" id="UP000002279">
    <property type="component" value="Mitochondrion"/>
</dbReference>
<dbReference type="Bgee" id="ENSOANG00000019361">
    <property type="expression patterns" value="Expressed in heart and 6 other cell types or tissues"/>
</dbReference>
<dbReference type="GO" id="GO:0005743">
    <property type="term" value="C:mitochondrial inner membrane"/>
    <property type="evidence" value="ECO:0000250"/>
    <property type="project" value="UniProtKB"/>
</dbReference>
<dbReference type="GO" id="GO:0005739">
    <property type="term" value="C:mitochondrion"/>
    <property type="evidence" value="ECO:0000318"/>
    <property type="project" value="GO_Central"/>
</dbReference>
<dbReference type="GO" id="GO:0008137">
    <property type="term" value="F:NADH dehydrogenase (ubiquinone) activity"/>
    <property type="evidence" value="ECO:0000250"/>
    <property type="project" value="UniProtKB"/>
</dbReference>
<dbReference type="GO" id="GO:0006120">
    <property type="term" value="P:mitochondrial electron transport, NADH to ubiquinone"/>
    <property type="evidence" value="ECO:0000250"/>
    <property type="project" value="UniProtKB"/>
</dbReference>
<dbReference type="GO" id="GO:0032981">
    <property type="term" value="P:mitochondrial respiratory chain complex I assembly"/>
    <property type="evidence" value="ECO:0000250"/>
    <property type="project" value="UniProtKB"/>
</dbReference>
<dbReference type="Gene3D" id="1.20.120.1200">
    <property type="entry name" value="NADH-ubiquinone/plastoquinone oxidoreductase chain 6, subunit NuoJ"/>
    <property type="match status" value="1"/>
</dbReference>
<dbReference type="InterPro" id="IPR050269">
    <property type="entry name" value="ComplexI_Subunit6"/>
</dbReference>
<dbReference type="InterPro" id="IPR001457">
    <property type="entry name" value="NADH_UbQ/plastoQ_OxRdtase_su6"/>
</dbReference>
<dbReference type="InterPro" id="IPR042106">
    <property type="entry name" value="Nuo/plastoQ_OxRdtase_6_NuoJ"/>
</dbReference>
<dbReference type="PANTHER" id="PTHR11435">
    <property type="entry name" value="NADH UBIQUINONE OXIDOREDUCTASE SUBUNIT ND6"/>
    <property type="match status" value="1"/>
</dbReference>
<dbReference type="PANTHER" id="PTHR11435:SF1">
    <property type="entry name" value="NADH-UBIQUINONE OXIDOREDUCTASE CHAIN 6"/>
    <property type="match status" value="1"/>
</dbReference>
<dbReference type="Pfam" id="PF00499">
    <property type="entry name" value="Oxidored_q3"/>
    <property type="match status" value="1"/>
</dbReference>
<keyword id="KW-0249">Electron transport</keyword>
<keyword id="KW-0472">Membrane</keyword>
<keyword id="KW-0496">Mitochondrion</keyword>
<keyword id="KW-0999">Mitochondrion inner membrane</keyword>
<keyword id="KW-0520">NAD</keyword>
<keyword id="KW-1185">Reference proteome</keyword>
<keyword id="KW-0679">Respiratory chain</keyword>
<keyword id="KW-1278">Translocase</keyword>
<keyword id="KW-0812">Transmembrane</keyword>
<keyword id="KW-1133">Transmembrane helix</keyword>
<keyword id="KW-0813">Transport</keyword>
<keyword id="KW-0830">Ubiquinone</keyword>
<geneLocation type="mitochondrion"/>
<accession>Q36460</accession>
<reference key="1">
    <citation type="journal article" date="1996" name="J. Mol. Evol.">
        <title>The mitochondrial genome of a monotreme--the platypus (Ornithorhynchus anatinus).</title>
        <authorList>
            <person name="Janke A."/>
            <person name="Gemmell N.J."/>
            <person name="Feldmaier-Fuchs G."/>
            <person name="von Haeseler A."/>
            <person name="Paabo S."/>
        </authorList>
    </citation>
    <scope>NUCLEOTIDE SEQUENCE [LARGE SCALE GENOMIC DNA]</scope>
    <source>
        <strain evidence="5">Glennie</strain>
    </source>
</reference>
<feature type="chain" id="PRO_0000118308" description="NADH-ubiquinone oxidoreductase chain 6">
    <location>
        <begin position="1"/>
        <end position="166"/>
    </location>
</feature>
<feature type="transmembrane region" description="Helical" evidence="3">
    <location>
        <begin position="1"/>
        <end position="21"/>
    </location>
</feature>
<feature type="transmembrane region" description="Helical" evidence="3">
    <location>
        <begin position="26"/>
        <end position="46"/>
    </location>
</feature>
<feature type="transmembrane region" description="Helical" evidence="3">
    <location>
        <begin position="47"/>
        <end position="67"/>
    </location>
</feature>
<feature type="transmembrane region" description="Helical" evidence="3">
    <location>
        <begin position="87"/>
        <end position="107"/>
    </location>
</feature>
<feature type="transmembrane region" description="Helical" evidence="3">
    <location>
        <begin position="139"/>
        <end position="159"/>
    </location>
</feature>
<proteinExistence type="inferred from homology"/>
<sequence>MMYFVYLLSILLVLGFMAFASKPSPIYGGLSLVLSGGVGCGIVVSLGGSFLGLIVFLVYLGGMLVVFGYTAAMATEEYPETWVDSTVFTNLLIMVGMLGVIWYYFSGEVDLSINYDLLDLGGVEVLGGDYNGVSLLSACGGWELIFSGWILFLTIFVVLEVTRGEH</sequence>
<name>NU6M_ORNAN</name>
<gene>
    <name type="primary">MT-ND6</name>
    <name type="synonym">MTND6</name>
    <name type="synonym">NADH6</name>
    <name type="synonym">ND6</name>
</gene>
<evidence type="ECO:0000250" key="1">
    <source>
        <dbReference type="UniProtKB" id="P03923"/>
    </source>
</evidence>
<evidence type="ECO:0000250" key="2">
    <source>
        <dbReference type="UniProtKB" id="P03924"/>
    </source>
</evidence>
<evidence type="ECO:0000255" key="3"/>
<evidence type="ECO:0000305" key="4"/>
<evidence type="ECO:0000312" key="5">
    <source>
        <dbReference type="Proteomes" id="UP000002279"/>
    </source>
</evidence>
<protein>
    <recommendedName>
        <fullName>NADH-ubiquinone oxidoreductase chain 6</fullName>
        <ecNumber evidence="1">7.1.1.2</ecNumber>
    </recommendedName>
    <alternativeName>
        <fullName>NADH dehydrogenase subunit 6</fullName>
    </alternativeName>
</protein>
<organism>
    <name type="scientific">Ornithorhynchus anatinus</name>
    <name type="common">Duckbill platypus</name>
    <dbReference type="NCBI Taxonomy" id="9258"/>
    <lineage>
        <taxon>Eukaryota</taxon>
        <taxon>Metazoa</taxon>
        <taxon>Chordata</taxon>
        <taxon>Craniata</taxon>
        <taxon>Vertebrata</taxon>
        <taxon>Euteleostomi</taxon>
        <taxon>Mammalia</taxon>
        <taxon>Monotremata</taxon>
        <taxon>Ornithorhynchidae</taxon>
        <taxon>Ornithorhynchus</taxon>
    </lineage>
</organism>